<evidence type="ECO:0000255" key="1">
    <source>
        <dbReference type="HAMAP-Rule" id="MF_01072"/>
    </source>
</evidence>
<reference key="1">
    <citation type="submission" date="2009-07" db="EMBL/GenBank/DDBJ databases">
        <title>Complete sequence of Pectobacterium carotovorum subsp. carotovorum PC1.</title>
        <authorList>
            <consortium name="US DOE Joint Genome Institute"/>
            <person name="Lucas S."/>
            <person name="Copeland A."/>
            <person name="Lapidus A."/>
            <person name="Glavina del Rio T."/>
            <person name="Tice H."/>
            <person name="Bruce D."/>
            <person name="Goodwin L."/>
            <person name="Pitluck S."/>
            <person name="Munk A.C."/>
            <person name="Brettin T."/>
            <person name="Detter J.C."/>
            <person name="Han C."/>
            <person name="Tapia R."/>
            <person name="Larimer F."/>
            <person name="Land M."/>
            <person name="Hauser L."/>
            <person name="Kyrpides N."/>
            <person name="Mikhailova N."/>
            <person name="Balakrishnan V."/>
            <person name="Glasner J."/>
            <person name="Perna N.T."/>
        </authorList>
    </citation>
    <scope>NUCLEOTIDE SEQUENCE [LARGE SCALE GENOMIC DNA]</scope>
    <source>
        <strain>PC1</strain>
    </source>
</reference>
<proteinExistence type="inferred from homology"/>
<dbReference type="EC" id="2.4.1.-" evidence="1"/>
<dbReference type="EMBL" id="CP001657">
    <property type="protein sequence ID" value="ACT13553.1"/>
    <property type="molecule type" value="Genomic_DNA"/>
</dbReference>
<dbReference type="RefSeq" id="WP_015840728.1">
    <property type="nucleotide sequence ID" value="NC_012917.1"/>
</dbReference>
<dbReference type="STRING" id="561230.PC1_2522"/>
<dbReference type="CAZy" id="GT2">
    <property type="family name" value="Glycosyltransferase Family 2"/>
</dbReference>
<dbReference type="KEGG" id="pct:PC1_2522"/>
<dbReference type="eggNOG" id="COG2943">
    <property type="taxonomic scope" value="Bacteria"/>
</dbReference>
<dbReference type="HOGENOM" id="CLU_015730_1_0_6"/>
<dbReference type="OrthoDB" id="9775281at2"/>
<dbReference type="UniPathway" id="UPA00637"/>
<dbReference type="Proteomes" id="UP000002736">
    <property type="component" value="Chromosome"/>
</dbReference>
<dbReference type="GO" id="GO:0005886">
    <property type="term" value="C:plasma membrane"/>
    <property type="evidence" value="ECO:0007669"/>
    <property type="project" value="UniProtKB-SubCell"/>
</dbReference>
<dbReference type="GO" id="GO:0016758">
    <property type="term" value="F:hexosyltransferase activity"/>
    <property type="evidence" value="ECO:0007669"/>
    <property type="project" value="UniProtKB-UniRule"/>
</dbReference>
<dbReference type="GO" id="GO:0009250">
    <property type="term" value="P:glucan biosynthetic process"/>
    <property type="evidence" value="ECO:0007669"/>
    <property type="project" value="UniProtKB-UniRule"/>
</dbReference>
<dbReference type="CDD" id="cd04191">
    <property type="entry name" value="Glucan_BSP_MdoH"/>
    <property type="match status" value="1"/>
</dbReference>
<dbReference type="FunFam" id="3.90.550.10:FF:000047">
    <property type="entry name" value="Glucans biosynthesis glucosyltransferase H"/>
    <property type="match status" value="1"/>
</dbReference>
<dbReference type="Gene3D" id="3.90.550.10">
    <property type="entry name" value="Spore Coat Polysaccharide Biosynthesis Protein SpsA, Chain A"/>
    <property type="match status" value="1"/>
</dbReference>
<dbReference type="HAMAP" id="MF_01072">
    <property type="entry name" value="MdoH_OpgH"/>
    <property type="match status" value="1"/>
</dbReference>
<dbReference type="InterPro" id="IPR023725">
    <property type="entry name" value="Glucans_biosynth_gluTrFase_H"/>
</dbReference>
<dbReference type="InterPro" id="IPR001173">
    <property type="entry name" value="Glyco_trans_2-like"/>
</dbReference>
<dbReference type="InterPro" id="IPR050321">
    <property type="entry name" value="Glycosyltr_2/OpgH_subfam"/>
</dbReference>
<dbReference type="InterPro" id="IPR029044">
    <property type="entry name" value="Nucleotide-diphossugar_trans"/>
</dbReference>
<dbReference type="NCBIfam" id="NF003955">
    <property type="entry name" value="PRK05454.1-1"/>
    <property type="match status" value="1"/>
</dbReference>
<dbReference type="NCBIfam" id="NF003958">
    <property type="entry name" value="PRK05454.2-1"/>
    <property type="match status" value="1"/>
</dbReference>
<dbReference type="NCBIfam" id="NF003962">
    <property type="entry name" value="PRK05454.2-5"/>
    <property type="match status" value="1"/>
</dbReference>
<dbReference type="PANTHER" id="PTHR43867">
    <property type="entry name" value="CELLULOSE SYNTHASE CATALYTIC SUBUNIT A [UDP-FORMING]"/>
    <property type="match status" value="1"/>
</dbReference>
<dbReference type="PANTHER" id="PTHR43867:SF5">
    <property type="entry name" value="GLUCANS BIOSYNTHESIS GLUCOSYLTRANSFERASE H"/>
    <property type="match status" value="1"/>
</dbReference>
<dbReference type="Pfam" id="PF00535">
    <property type="entry name" value="Glycos_transf_2"/>
    <property type="match status" value="1"/>
</dbReference>
<dbReference type="SUPFAM" id="SSF53448">
    <property type="entry name" value="Nucleotide-diphospho-sugar transferases"/>
    <property type="match status" value="1"/>
</dbReference>
<sequence length="854" mass="97490">MNKSTSSLDYIEKLPLPAEQAEVLREKLPQAAWNDQAVLHQALSEGSPSEEHQVNVQSEDDATLQSVQARLEMAWAEGLDNGKQLGTDREGRTALKAMPVITRASMFPDVWRTNPLVRWWESLLGRTVPPRPHYSPEEKISENRWRLVGTIRRYILLVLTLFQTAIATWYMKTILPYQGWALIDPFEMAGQPWTRSLMQLLPYVLQSGILVLFAVLFCWVSAGFWTALMGFLQLLIGRDKYSISSTTVGNEPLNPEHRTALIMPICNEDVERVFAGLRATYESVEATGNLEHFDIYVLSDSNDPDICVAEQKAWMELCRDVGGTGRIFYRRRRRRVKRKSGNIDDFCRRWGNQYSYMVILDADSVMSGECLTSLVRLMEANPNAGIIQSSPKASGMDTLYARCQQFATRVYGPLFTAGLHFWQLGESHYWGHNAIIRVKPFIEHCALAPLPGEGSFAGAILSHDFVEAALMRRAGWGVWIAYDLPGSYEELPPNLLDELKRDRRWCHGNLMNFRLFLVKGMHPVHRAVFLTGVMSYLSAPLWFMFLMLSTALQVVHTLMEPQYFLQPRQLFPVWPQWRPELAIALFSTTLVLLFLPKLLSVILVWAKGAKEYGGALRVFISLLLEMLFSVLLAPVRMLFHTVFVVSAFLGWSVQWNSPQRDDDATPWSEAFVRHGSQLILGLVWAIGMAWLDLRFLWWLAPIVFSLILSPFVSVYSSRASLGLGCKRAKLLMIPEEFNPPRELVATDEYCRLNHQRRLDNGFMQAVFDPSINALASAMATARHRFSQAIEDVREKNVRDALNRKPEEVSNNQRLVLLSDPVTISRLHYHVWQKPETYAAWVESYQKLPAPHIKS</sequence>
<comment type="function">
    <text evidence="1">Involved in the biosynthesis of osmoregulated periplasmic glucans (OPGs).</text>
</comment>
<comment type="pathway">
    <text evidence="1">Glycan metabolism; osmoregulated periplasmic glucan (OPG) biosynthesis.</text>
</comment>
<comment type="subcellular location">
    <subcellularLocation>
        <location evidence="1">Cell inner membrane</location>
        <topology evidence="1">Multi-pass membrane protein</topology>
    </subcellularLocation>
</comment>
<comment type="similarity">
    <text evidence="1">Belongs to the glycosyltransferase 2 family. OpgH subfamily.</text>
</comment>
<feature type="chain" id="PRO_1000213476" description="Glucans biosynthesis glucosyltransferase H">
    <location>
        <begin position="1"/>
        <end position="854"/>
    </location>
</feature>
<feature type="transmembrane region" description="Helical" evidence="1">
    <location>
        <begin position="155"/>
        <end position="175"/>
    </location>
</feature>
<feature type="transmembrane region" description="Helical" evidence="1">
    <location>
        <begin position="209"/>
        <end position="229"/>
    </location>
</feature>
<feature type="transmembrane region" description="Helical" evidence="1">
    <location>
        <begin position="528"/>
        <end position="548"/>
    </location>
</feature>
<feature type="transmembrane region" description="Helical" evidence="1">
    <location>
        <begin position="583"/>
        <end position="603"/>
    </location>
</feature>
<feature type="transmembrane region" description="Helical" evidence="1">
    <location>
        <begin position="619"/>
        <end position="639"/>
    </location>
</feature>
<feature type="transmembrane region" description="Helical" evidence="1">
    <location>
        <begin position="671"/>
        <end position="691"/>
    </location>
</feature>
<feature type="transmembrane region" description="Helical" evidence="1">
    <location>
        <begin position="695"/>
        <end position="715"/>
    </location>
</feature>
<gene>
    <name evidence="1" type="primary">mdoH</name>
    <name evidence="1" type="synonym">opgH</name>
    <name type="ordered locus">PC1_2522</name>
</gene>
<accession>C6DKV2</accession>
<name>OPGH_PECCP</name>
<keyword id="KW-0997">Cell inner membrane</keyword>
<keyword id="KW-1003">Cell membrane</keyword>
<keyword id="KW-0328">Glycosyltransferase</keyword>
<keyword id="KW-0472">Membrane</keyword>
<keyword id="KW-0808">Transferase</keyword>
<keyword id="KW-0812">Transmembrane</keyword>
<keyword id="KW-1133">Transmembrane helix</keyword>
<organism>
    <name type="scientific">Pectobacterium carotovorum subsp. carotovorum (strain PC1)</name>
    <dbReference type="NCBI Taxonomy" id="561230"/>
    <lineage>
        <taxon>Bacteria</taxon>
        <taxon>Pseudomonadati</taxon>
        <taxon>Pseudomonadota</taxon>
        <taxon>Gammaproteobacteria</taxon>
        <taxon>Enterobacterales</taxon>
        <taxon>Pectobacteriaceae</taxon>
        <taxon>Pectobacterium</taxon>
    </lineage>
</organism>
<protein>
    <recommendedName>
        <fullName evidence="1">Glucans biosynthesis glucosyltransferase H</fullName>
        <ecNumber evidence="1">2.4.1.-</ecNumber>
    </recommendedName>
</protein>